<gene>
    <name evidence="1" type="primary">miaA</name>
    <name type="ordered locus">AZC_2575</name>
</gene>
<name>MIAA_AZOC5</name>
<keyword id="KW-0067">ATP-binding</keyword>
<keyword id="KW-0460">Magnesium</keyword>
<keyword id="KW-0547">Nucleotide-binding</keyword>
<keyword id="KW-1185">Reference proteome</keyword>
<keyword id="KW-0808">Transferase</keyword>
<keyword id="KW-0819">tRNA processing</keyword>
<accession>A8IAX3</accession>
<organism>
    <name type="scientific">Azorhizobium caulinodans (strain ATCC 43989 / DSM 5975 / JCM 20966 / LMG 6465 / NBRC 14845 / NCIMB 13405 / ORS 571)</name>
    <dbReference type="NCBI Taxonomy" id="438753"/>
    <lineage>
        <taxon>Bacteria</taxon>
        <taxon>Pseudomonadati</taxon>
        <taxon>Pseudomonadota</taxon>
        <taxon>Alphaproteobacteria</taxon>
        <taxon>Hyphomicrobiales</taxon>
        <taxon>Xanthobacteraceae</taxon>
        <taxon>Azorhizobium</taxon>
    </lineage>
</organism>
<proteinExistence type="inferred from homology"/>
<protein>
    <recommendedName>
        <fullName evidence="1">tRNA dimethylallyltransferase</fullName>
        <ecNumber evidence="1">2.5.1.75</ecNumber>
    </recommendedName>
    <alternativeName>
        <fullName evidence="1">Dimethylallyl diphosphate:tRNA dimethylallyltransferase</fullName>
        <shortName evidence="1">DMAPP:tRNA dimethylallyltransferase</shortName>
        <shortName evidence="1">DMATase</shortName>
    </alternativeName>
    <alternativeName>
        <fullName evidence="1">Isopentenyl-diphosphate:tRNA isopentenyltransferase</fullName>
        <shortName evidence="1">IPP transferase</shortName>
        <shortName evidence="1">IPPT</shortName>
        <shortName evidence="1">IPTase</shortName>
    </alternativeName>
</protein>
<comment type="function">
    <text evidence="1">Catalyzes the transfer of a dimethylallyl group onto the adenine at position 37 in tRNAs that read codons beginning with uridine, leading to the formation of N6-(dimethylallyl)adenosine (i(6)A).</text>
</comment>
<comment type="catalytic activity">
    <reaction evidence="1">
        <text>adenosine(37) in tRNA + dimethylallyl diphosphate = N(6)-dimethylallyladenosine(37) in tRNA + diphosphate</text>
        <dbReference type="Rhea" id="RHEA:26482"/>
        <dbReference type="Rhea" id="RHEA-COMP:10162"/>
        <dbReference type="Rhea" id="RHEA-COMP:10375"/>
        <dbReference type="ChEBI" id="CHEBI:33019"/>
        <dbReference type="ChEBI" id="CHEBI:57623"/>
        <dbReference type="ChEBI" id="CHEBI:74411"/>
        <dbReference type="ChEBI" id="CHEBI:74415"/>
        <dbReference type="EC" id="2.5.1.75"/>
    </reaction>
</comment>
<comment type="cofactor">
    <cofactor evidence="1">
        <name>Mg(2+)</name>
        <dbReference type="ChEBI" id="CHEBI:18420"/>
    </cofactor>
</comment>
<comment type="subunit">
    <text evidence="1">Monomer.</text>
</comment>
<comment type="similarity">
    <text evidence="1">Belongs to the IPP transferase family.</text>
</comment>
<evidence type="ECO:0000255" key="1">
    <source>
        <dbReference type="HAMAP-Rule" id="MF_00185"/>
    </source>
</evidence>
<sequence length="312" mass="34779">MGLRDSEALKPLAVLIAGPTASGKSALALDLAERTDGVIINADSMQVYGDLRILTARPSPEEEMRVPHRLYGHVDGAADYSVARWIADAAAAMATARAEGRLPIVIGGTGLYFRALTRGLAPIPEIPEEVRQRVRRMAEDEVTVVLHARLATRDPEAAVRLQPQDRQRILRALEVFEATGQPLSQWQRATHRPVLEEASAVRFVLEVERETLRGRIDRRFETMMEAGALAEVERLAARELPADRTILKAHGAPALTRYLRGEMSRADAIAEGQNDTRRYAKRQVTWFRHQMPDWMRGTPDTALDQLTGTLRL</sequence>
<feature type="chain" id="PRO_1000098640" description="tRNA dimethylallyltransferase">
    <location>
        <begin position="1"/>
        <end position="312"/>
    </location>
</feature>
<feature type="region of interest" description="Interaction with substrate tRNA" evidence="1">
    <location>
        <begin position="43"/>
        <end position="46"/>
    </location>
</feature>
<feature type="region of interest" description="Interaction with substrate tRNA" evidence="1">
    <location>
        <begin position="167"/>
        <end position="171"/>
    </location>
</feature>
<feature type="binding site" evidence="1">
    <location>
        <begin position="18"/>
        <end position="25"/>
    </location>
    <ligand>
        <name>ATP</name>
        <dbReference type="ChEBI" id="CHEBI:30616"/>
    </ligand>
</feature>
<feature type="binding site" evidence="1">
    <location>
        <begin position="20"/>
        <end position="25"/>
    </location>
    <ligand>
        <name>substrate</name>
    </ligand>
</feature>
<feature type="site" description="Interaction with substrate tRNA" evidence="1">
    <location>
        <position position="109"/>
    </location>
</feature>
<feature type="site" description="Interaction with substrate tRNA" evidence="1">
    <location>
        <position position="131"/>
    </location>
</feature>
<reference key="1">
    <citation type="submission" date="2007-04" db="EMBL/GenBank/DDBJ databases">
        <title>Complete genome sequence of the nitrogen-fixing bacterium Azorhizobium caulinodans ORS571.</title>
        <authorList>
            <person name="Lee K.B."/>
            <person name="Backer P.D."/>
            <person name="Aono T."/>
            <person name="Liu C.T."/>
            <person name="Suzuki S."/>
            <person name="Suzuki T."/>
            <person name="Kaneko T."/>
            <person name="Yamada M."/>
            <person name="Tabata S."/>
            <person name="Kupfer D.M."/>
            <person name="Najar F.Z."/>
            <person name="Wiley G.B."/>
            <person name="Roe B."/>
            <person name="Binnewies T."/>
            <person name="Ussery D."/>
            <person name="Vereecke D."/>
            <person name="Gevers D."/>
            <person name="Holsters M."/>
            <person name="Oyaizu H."/>
        </authorList>
    </citation>
    <scope>NUCLEOTIDE SEQUENCE [LARGE SCALE GENOMIC DNA]</scope>
    <source>
        <strain>ATCC 43989 / DSM 5975 / JCM 20966 / LMG 6465 / NBRC 14845 / NCIMB 13405 / ORS 571</strain>
    </source>
</reference>
<dbReference type="EC" id="2.5.1.75" evidence="1"/>
<dbReference type="EMBL" id="AP009384">
    <property type="protein sequence ID" value="BAF88573.1"/>
    <property type="molecule type" value="Genomic_DNA"/>
</dbReference>
<dbReference type="RefSeq" id="WP_012171099.1">
    <property type="nucleotide sequence ID" value="NC_009937.1"/>
</dbReference>
<dbReference type="SMR" id="A8IAX3"/>
<dbReference type="STRING" id="438753.AZC_2575"/>
<dbReference type="KEGG" id="azc:AZC_2575"/>
<dbReference type="eggNOG" id="COG0324">
    <property type="taxonomic scope" value="Bacteria"/>
</dbReference>
<dbReference type="HOGENOM" id="CLU_032616_0_1_5"/>
<dbReference type="Proteomes" id="UP000000270">
    <property type="component" value="Chromosome"/>
</dbReference>
<dbReference type="GO" id="GO:0005524">
    <property type="term" value="F:ATP binding"/>
    <property type="evidence" value="ECO:0007669"/>
    <property type="project" value="UniProtKB-UniRule"/>
</dbReference>
<dbReference type="GO" id="GO:0052381">
    <property type="term" value="F:tRNA dimethylallyltransferase activity"/>
    <property type="evidence" value="ECO:0007669"/>
    <property type="project" value="UniProtKB-UniRule"/>
</dbReference>
<dbReference type="GO" id="GO:0006400">
    <property type="term" value="P:tRNA modification"/>
    <property type="evidence" value="ECO:0007669"/>
    <property type="project" value="TreeGrafter"/>
</dbReference>
<dbReference type="FunFam" id="1.10.20.140:FF:000001">
    <property type="entry name" value="tRNA dimethylallyltransferase"/>
    <property type="match status" value="1"/>
</dbReference>
<dbReference type="Gene3D" id="1.10.20.140">
    <property type="match status" value="1"/>
</dbReference>
<dbReference type="Gene3D" id="3.40.50.300">
    <property type="entry name" value="P-loop containing nucleotide triphosphate hydrolases"/>
    <property type="match status" value="1"/>
</dbReference>
<dbReference type="HAMAP" id="MF_00185">
    <property type="entry name" value="IPP_trans"/>
    <property type="match status" value="1"/>
</dbReference>
<dbReference type="InterPro" id="IPR039657">
    <property type="entry name" value="Dimethylallyltransferase"/>
</dbReference>
<dbReference type="InterPro" id="IPR018022">
    <property type="entry name" value="IPT"/>
</dbReference>
<dbReference type="InterPro" id="IPR027417">
    <property type="entry name" value="P-loop_NTPase"/>
</dbReference>
<dbReference type="NCBIfam" id="TIGR00174">
    <property type="entry name" value="miaA"/>
    <property type="match status" value="1"/>
</dbReference>
<dbReference type="PANTHER" id="PTHR11088">
    <property type="entry name" value="TRNA DIMETHYLALLYLTRANSFERASE"/>
    <property type="match status" value="1"/>
</dbReference>
<dbReference type="PANTHER" id="PTHR11088:SF60">
    <property type="entry name" value="TRNA DIMETHYLALLYLTRANSFERASE"/>
    <property type="match status" value="1"/>
</dbReference>
<dbReference type="Pfam" id="PF01715">
    <property type="entry name" value="IPPT"/>
    <property type="match status" value="1"/>
</dbReference>
<dbReference type="SUPFAM" id="SSF52540">
    <property type="entry name" value="P-loop containing nucleoside triphosphate hydrolases"/>
    <property type="match status" value="2"/>
</dbReference>